<sequence length="360" mass="40643">MNACLVGIWLWLPLLFTWLSPEVSSSWWYMRATSGSSRVMCDNVPGLVSHQRQLCHRHPDVMRAIGLGVTEWTMECQHQFRQHRWNCNTLDRDHSLFGRVLLRSSRESAFVYAISSAGVVFAITRACSQGELKSCSCDPKKKGTAKDNKGTFDWGGCSDNIDYGIKFARAFVDAKERKGKDARALMNLHNNRAGRKAVKRFLKQECKCHGVSGSCTLRTCWLAMADFRKTGNYLWRKYNGAIQVVMNQDGTGFTVANKRFKKPTKNDLVYFENSPDYCIRDRDAGSLGTAGRVCNLTSRGMDSCEVMCCGRGYDTSHITRKTKCECKFHWCCAVRCQDCVEALDVHTCKAPKSPDWAAPT</sequence>
<protein>
    <recommendedName>
        <fullName>Protein Wnt-2</fullName>
    </recommendedName>
</protein>
<dbReference type="EMBL" id="DP000179">
    <property type="protein sequence ID" value="ABI75296.1"/>
    <property type="molecule type" value="Genomic_DNA"/>
</dbReference>
<dbReference type="RefSeq" id="NP_001182248.1">
    <property type="nucleotide sequence ID" value="NM_001195319.1"/>
</dbReference>
<dbReference type="SMR" id="Q09YI4"/>
<dbReference type="STRING" id="9940.ENSOARP00000020478"/>
<dbReference type="GlyCosmos" id="Q09YI4">
    <property type="glycosylation" value="1 site, No reported glycans"/>
</dbReference>
<dbReference type="PaxDb" id="9940-ENSOARP00000020478"/>
<dbReference type="Ensembl" id="ENSOART00040008791">
    <property type="protein sequence ID" value="ENSOARP00040004570"/>
    <property type="gene ID" value="ENSOARG00040005347"/>
</dbReference>
<dbReference type="Ensembl" id="ENSOART00180001756">
    <property type="protein sequence ID" value="ENSOARP00180000917"/>
    <property type="gene ID" value="ENSOARG00180001087"/>
</dbReference>
<dbReference type="Ensembl" id="ENSOART00185001050">
    <property type="protein sequence ID" value="ENSOARP00185000413"/>
    <property type="gene ID" value="ENSOARG00185000695"/>
</dbReference>
<dbReference type="Ensembl" id="ENSOART00215017843">
    <property type="protein sequence ID" value="ENSOARP00215008813"/>
    <property type="gene ID" value="ENSOARG00215010800"/>
</dbReference>
<dbReference type="Ensembl" id="ENSOART00220066022">
    <property type="protein sequence ID" value="ENSOARP00220035264"/>
    <property type="gene ID" value="ENSOARG00220039919"/>
</dbReference>
<dbReference type="Ensembl" id="ENSOART00225027410">
    <property type="protein sequence ID" value="ENSOARP00225013258"/>
    <property type="gene ID" value="ENSOARG00225016760"/>
</dbReference>
<dbReference type="Ensembl" id="ENSOART00260011906">
    <property type="protein sequence ID" value="ENSOARP00260005739"/>
    <property type="gene ID" value="ENSOARG00260007430"/>
</dbReference>
<dbReference type="GeneID" id="100126577"/>
<dbReference type="KEGG" id="oas:100126577"/>
<dbReference type="CTD" id="7472"/>
<dbReference type="eggNOG" id="KOG3913">
    <property type="taxonomic scope" value="Eukaryota"/>
</dbReference>
<dbReference type="HOGENOM" id="CLU_033039_1_4_1"/>
<dbReference type="OMA" id="ITRMTKC"/>
<dbReference type="OrthoDB" id="5945655at2759"/>
<dbReference type="Proteomes" id="UP000002356">
    <property type="component" value="Chromosome 4"/>
</dbReference>
<dbReference type="Bgee" id="ENSOARG00000019067">
    <property type="expression patterns" value="Expressed in mitral valve and 41 other cell types or tissues"/>
</dbReference>
<dbReference type="GO" id="GO:0005737">
    <property type="term" value="C:cytoplasm"/>
    <property type="evidence" value="ECO:0007669"/>
    <property type="project" value="Ensembl"/>
</dbReference>
<dbReference type="GO" id="GO:0005615">
    <property type="term" value="C:extracellular space"/>
    <property type="evidence" value="ECO:0007669"/>
    <property type="project" value="TreeGrafter"/>
</dbReference>
<dbReference type="GO" id="GO:0005125">
    <property type="term" value="F:cytokine activity"/>
    <property type="evidence" value="ECO:0007669"/>
    <property type="project" value="Ensembl"/>
</dbReference>
<dbReference type="GO" id="GO:0005109">
    <property type="term" value="F:frizzled binding"/>
    <property type="evidence" value="ECO:0007669"/>
    <property type="project" value="Ensembl"/>
</dbReference>
<dbReference type="GO" id="GO:0055009">
    <property type="term" value="P:atrial cardiac muscle tissue morphogenesis"/>
    <property type="evidence" value="ECO:0007669"/>
    <property type="project" value="Ensembl"/>
</dbReference>
<dbReference type="GO" id="GO:0060070">
    <property type="term" value="P:canonical Wnt signaling pathway"/>
    <property type="evidence" value="ECO:0007669"/>
    <property type="project" value="Ensembl"/>
</dbReference>
<dbReference type="GO" id="GO:0060317">
    <property type="term" value="P:cardiac epithelial to mesenchymal transition"/>
    <property type="evidence" value="ECO:0007669"/>
    <property type="project" value="Ensembl"/>
</dbReference>
<dbReference type="GO" id="GO:0060038">
    <property type="term" value="P:cardiac muscle cell proliferation"/>
    <property type="evidence" value="ECO:0007669"/>
    <property type="project" value="Ensembl"/>
</dbReference>
<dbReference type="GO" id="GO:0045165">
    <property type="term" value="P:cell fate commitment"/>
    <property type="evidence" value="ECO:0007669"/>
    <property type="project" value="TreeGrafter"/>
</dbReference>
<dbReference type="GO" id="GO:0033278">
    <property type="term" value="P:cell proliferation in midbrain"/>
    <property type="evidence" value="ECO:0007669"/>
    <property type="project" value="Ensembl"/>
</dbReference>
<dbReference type="GO" id="GO:0007267">
    <property type="term" value="P:cell-cell signaling"/>
    <property type="evidence" value="ECO:0007669"/>
    <property type="project" value="Ensembl"/>
</dbReference>
<dbReference type="GO" id="GO:0071560">
    <property type="term" value="P:cellular response to transforming growth factor beta stimulus"/>
    <property type="evidence" value="ECO:0007669"/>
    <property type="project" value="Ensembl"/>
</dbReference>
<dbReference type="GO" id="GO:0060502">
    <property type="term" value="P:epithelial cell proliferation involved in lung morphogenesis"/>
    <property type="evidence" value="ECO:0007669"/>
    <property type="project" value="Ensembl"/>
</dbReference>
<dbReference type="GO" id="GO:0060716">
    <property type="term" value="P:labyrinthine layer blood vessel development"/>
    <property type="evidence" value="ECO:0007669"/>
    <property type="project" value="Ensembl"/>
</dbReference>
<dbReference type="GO" id="GO:0060492">
    <property type="term" value="P:lung induction"/>
    <property type="evidence" value="ECO:0007669"/>
    <property type="project" value="Ensembl"/>
</dbReference>
<dbReference type="GO" id="GO:0061180">
    <property type="term" value="P:mammary gland epithelium development"/>
    <property type="evidence" value="ECO:0007669"/>
    <property type="project" value="Ensembl"/>
</dbReference>
<dbReference type="GO" id="GO:0010463">
    <property type="term" value="P:mesenchymal cell proliferation"/>
    <property type="evidence" value="ECO:0007669"/>
    <property type="project" value="Ensembl"/>
</dbReference>
<dbReference type="GO" id="GO:1904948">
    <property type="term" value="P:midbrain dopaminergic neuron differentiation"/>
    <property type="evidence" value="ECO:0007669"/>
    <property type="project" value="Ensembl"/>
</dbReference>
<dbReference type="GO" id="GO:0060045">
    <property type="term" value="P:positive regulation of cardiac muscle cell proliferation"/>
    <property type="evidence" value="ECO:0007669"/>
    <property type="project" value="Ensembl"/>
</dbReference>
<dbReference type="GO" id="GO:0060501">
    <property type="term" value="P:positive regulation of epithelial cell proliferation involved in lung morphogenesis"/>
    <property type="evidence" value="ECO:0007669"/>
    <property type="project" value="Ensembl"/>
</dbReference>
<dbReference type="GO" id="GO:0048146">
    <property type="term" value="P:positive regulation of fibroblast proliferation"/>
    <property type="evidence" value="ECO:0007669"/>
    <property type="project" value="Ensembl"/>
</dbReference>
<dbReference type="GO" id="GO:0002053">
    <property type="term" value="P:positive regulation of mesenchymal cell proliferation"/>
    <property type="evidence" value="ECO:0007669"/>
    <property type="project" value="Ensembl"/>
</dbReference>
<dbReference type="GO" id="GO:0050769">
    <property type="term" value="P:positive regulation of neurogenesis"/>
    <property type="evidence" value="ECO:0007669"/>
    <property type="project" value="Ensembl"/>
</dbReference>
<dbReference type="GO" id="GO:0045944">
    <property type="term" value="P:positive regulation of transcription by RNA polymerase II"/>
    <property type="evidence" value="ECO:0007669"/>
    <property type="project" value="Ensembl"/>
</dbReference>
<dbReference type="CDD" id="cd19345">
    <property type="entry name" value="Wnt_Wnt2"/>
    <property type="match status" value="1"/>
</dbReference>
<dbReference type="FunFam" id="3.30.2460.20:FF:000001">
    <property type="entry name" value="Wnt homolog"/>
    <property type="match status" value="1"/>
</dbReference>
<dbReference type="Gene3D" id="3.30.2460.20">
    <property type="match status" value="1"/>
</dbReference>
<dbReference type="InterPro" id="IPR005817">
    <property type="entry name" value="Wnt"/>
</dbReference>
<dbReference type="InterPro" id="IPR009140">
    <property type="entry name" value="Wnt2"/>
</dbReference>
<dbReference type="InterPro" id="IPR043158">
    <property type="entry name" value="Wnt_C"/>
</dbReference>
<dbReference type="InterPro" id="IPR018161">
    <property type="entry name" value="Wnt_CS"/>
</dbReference>
<dbReference type="PANTHER" id="PTHR12027:SF86">
    <property type="entry name" value="PROTEIN WNT-2"/>
    <property type="match status" value="1"/>
</dbReference>
<dbReference type="PANTHER" id="PTHR12027">
    <property type="entry name" value="WNT RELATED"/>
    <property type="match status" value="1"/>
</dbReference>
<dbReference type="Pfam" id="PF00110">
    <property type="entry name" value="wnt"/>
    <property type="match status" value="1"/>
</dbReference>
<dbReference type="PRINTS" id="PR01842">
    <property type="entry name" value="WNT2PROTEIN"/>
</dbReference>
<dbReference type="PRINTS" id="PR01349">
    <property type="entry name" value="WNTPROTEIN"/>
</dbReference>
<dbReference type="SMART" id="SM00097">
    <property type="entry name" value="WNT1"/>
    <property type="match status" value="1"/>
</dbReference>
<dbReference type="PROSITE" id="PS00246">
    <property type="entry name" value="WNT1"/>
    <property type="match status" value="1"/>
</dbReference>
<reference key="1">
    <citation type="submission" date="2006-09" db="EMBL/GenBank/DDBJ databases">
        <title>NISC comparative sequencing initiative.</title>
        <authorList>
            <person name="Antonellis A."/>
            <person name="Ayele K."/>
            <person name="Benjamin B."/>
            <person name="Blakesley R.W."/>
            <person name="Boakye A."/>
            <person name="Bouffard G.G."/>
            <person name="Brinkley C."/>
            <person name="Brooks S."/>
            <person name="Chu G."/>
            <person name="Coleman H."/>
            <person name="Engle J."/>
            <person name="Gestole M."/>
            <person name="Greene A."/>
            <person name="Guan X."/>
            <person name="Gupta J."/>
            <person name="Haghighi P."/>
            <person name="Han J."/>
            <person name="Hansen N."/>
            <person name="Ho S.-L."/>
            <person name="Hu P."/>
            <person name="Hunter G."/>
            <person name="Hurle B."/>
            <person name="Idol J.R."/>
            <person name="Kwong P."/>
            <person name="Laric P."/>
            <person name="Larson S."/>
            <person name="Lee-Lin S.-Q."/>
            <person name="Legaspi R."/>
            <person name="Madden M."/>
            <person name="Maduro Q.L."/>
            <person name="Maduro V.B."/>
            <person name="Margulies E.H."/>
            <person name="Masiello C."/>
            <person name="Maskeri B."/>
            <person name="McDowell J."/>
            <person name="Mojidi H.A."/>
            <person name="Mullikin J.C."/>
            <person name="Oestreicher J.S."/>
            <person name="Park M."/>
            <person name="Portnoy M.E."/>
            <person name="Prasad A."/>
            <person name="Puri O."/>
            <person name="Reddix-Dugue N."/>
            <person name="Schandler K."/>
            <person name="Schueler M.G."/>
            <person name="Sison C."/>
            <person name="Stantripop S."/>
            <person name="Stephen E."/>
            <person name="Taye A."/>
            <person name="Thomas J.W."/>
            <person name="Thomas P.J."/>
            <person name="Tsipouri V."/>
            <person name="Ung L."/>
            <person name="Vogt J.L."/>
            <person name="Wetherby K.D."/>
            <person name="Young A."/>
            <person name="Green E.D."/>
        </authorList>
    </citation>
    <scope>NUCLEOTIDE SEQUENCE [LARGE SCALE GENOMIC DNA]</scope>
</reference>
<organism>
    <name type="scientific">Ovis aries</name>
    <name type="common">Sheep</name>
    <dbReference type="NCBI Taxonomy" id="9940"/>
    <lineage>
        <taxon>Eukaryota</taxon>
        <taxon>Metazoa</taxon>
        <taxon>Chordata</taxon>
        <taxon>Craniata</taxon>
        <taxon>Vertebrata</taxon>
        <taxon>Euteleostomi</taxon>
        <taxon>Mammalia</taxon>
        <taxon>Eutheria</taxon>
        <taxon>Laurasiatheria</taxon>
        <taxon>Artiodactyla</taxon>
        <taxon>Ruminantia</taxon>
        <taxon>Pecora</taxon>
        <taxon>Bovidae</taxon>
        <taxon>Caprinae</taxon>
        <taxon>Ovis</taxon>
    </lineage>
</organism>
<comment type="function">
    <text evidence="1 2">Ligand for members of the frizzled family of seven transmembrane receptors. Functions in the canonical Wnt signaling pathway that results in activation of transcription factors of the TCF/LEF family (By similarity). Functions as a upstream regulator of FGF10 expression. Plays an important role in embryonic lung development. May contribute to embryonic brain development by regulating the proliferation of dopaminergic precursors and neurons (By similarity).</text>
</comment>
<comment type="subcellular location">
    <subcellularLocation>
        <location evidence="1">Secreted</location>
        <location evidence="1">Extracellular space</location>
        <location evidence="1">Extracellular matrix</location>
    </subcellularLocation>
    <subcellularLocation>
        <location evidence="1">Secreted</location>
    </subcellularLocation>
</comment>
<comment type="PTM">
    <text evidence="1">Palmitoleoylation is required for efficient binding to frizzled receptors. Depalmitoleoylation leads to Wnt signaling pathway inhibition.</text>
</comment>
<comment type="similarity">
    <text evidence="6">Belongs to the Wnt family.</text>
</comment>
<keyword id="KW-0217">Developmental protein</keyword>
<keyword id="KW-1015">Disulfide bond</keyword>
<keyword id="KW-0272">Extracellular matrix</keyword>
<keyword id="KW-0325">Glycoprotein</keyword>
<keyword id="KW-0449">Lipoprotein</keyword>
<keyword id="KW-1185">Reference proteome</keyword>
<keyword id="KW-0964">Secreted</keyword>
<keyword id="KW-0732">Signal</keyword>
<keyword id="KW-0879">Wnt signaling pathway</keyword>
<feature type="signal peptide" evidence="5">
    <location>
        <begin position="1"/>
        <end position="25"/>
    </location>
</feature>
<feature type="chain" id="PRO_0000260349" description="Protein Wnt-2">
    <location>
        <begin position="26"/>
        <end position="360"/>
    </location>
</feature>
<feature type="lipid moiety-binding region" description="O-palmitoleoyl serine; by PORCN" evidence="4">
    <location>
        <position position="212"/>
    </location>
</feature>
<feature type="glycosylation site" description="N-linked (GlcNAc...) asparagine" evidence="5">
    <location>
        <position position="295"/>
    </location>
</feature>
<feature type="disulfide bond" evidence="3">
    <location>
        <begin position="76"/>
        <end position="87"/>
    </location>
</feature>
<feature type="disulfide bond" evidence="3">
    <location>
        <begin position="127"/>
        <end position="135"/>
    </location>
</feature>
<feature type="disulfide bond" evidence="3">
    <location>
        <begin position="137"/>
        <end position="157"/>
    </location>
</feature>
<feature type="disulfide bond" evidence="3">
    <location>
        <begin position="206"/>
        <end position="220"/>
    </location>
</feature>
<feature type="disulfide bond" evidence="3">
    <location>
        <begin position="208"/>
        <end position="215"/>
    </location>
</feature>
<feature type="disulfide bond" evidence="3">
    <location>
        <begin position="278"/>
        <end position="309"/>
    </location>
</feature>
<feature type="disulfide bond" evidence="3">
    <location>
        <begin position="294"/>
        <end position="304"/>
    </location>
</feature>
<feature type="disulfide bond" evidence="3">
    <location>
        <begin position="308"/>
        <end position="348"/>
    </location>
</feature>
<feature type="disulfide bond" evidence="3">
    <location>
        <begin position="324"/>
        <end position="339"/>
    </location>
</feature>
<feature type="disulfide bond" evidence="3">
    <location>
        <begin position="326"/>
        <end position="336"/>
    </location>
</feature>
<feature type="disulfide bond" evidence="3">
    <location>
        <begin position="331"/>
        <end position="332"/>
    </location>
</feature>
<gene>
    <name type="primary">WNT2</name>
</gene>
<evidence type="ECO:0000250" key="1">
    <source>
        <dbReference type="UniProtKB" id="P09544"/>
    </source>
</evidence>
<evidence type="ECO:0000250" key="2">
    <source>
        <dbReference type="UniProtKB" id="P21552"/>
    </source>
</evidence>
<evidence type="ECO:0000250" key="3">
    <source>
        <dbReference type="UniProtKB" id="P28026"/>
    </source>
</evidence>
<evidence type="ECO:0000250" key="4">
    <source>
        <dbReference type="UniProtKB" id="P56704"/>
    </source>
</evidence>
<evidence type="ECO:0000255" key="5"/>
<evidence type="ECO:0000305" key="6"/>
<accession>Q09YI4</accession>
<name>WNT2_SHEEP</name>
<proteinExistence type="inferred from homology"/>